<protein>
    <recommendedName>
        <fullName>UPF0380 protein YubP</fullName>
    </recommendedName>
</protein>
<proteinExistence type="inferred from homology"/>
<keyword id="KW-0614">Plasmid</keyword>
<feature type="chain" id="PRO_0000197621" description="UPF0380 protein YubP">
    <location>
        <begin position="1"/>
        <end position="273"/>
    </location>
</feature>
<feature type="sequence variant" description="In plasmid IncFII R1.">
    <original>H</original>
    <variation>R</variation>
    <location>
        <position position="14"/>
    </location>
</feature>
<feature type="sequence variant" description="In plasmid IncFII R1.">
    <original>W</original>
    <variation>R</variation>
    <location>
        <position position="210"/>
    </location>
</feature>
<feature type="sequence conflict" description="In Ref. 1; AAA99218." evidence="1" ref="1">
    <original>N</original>
    <variation>T</variation>
    <location>
        <position position="54"/>
    </location>
</feature>
<organism>
    <name type="scientific">Escherichia coli (strain K12)</name>
    <dbReference type="NCBI Taxonomy" id="83333"/>
    <lineage>
        <taxon>Bacteria</taxon>
        <taxon>Pseudomonadati</taxon>
        <taxon>Pseudomonadota</taxon>
        <taxon>Gammaproteobacteria</taxon>
        <taxon>Enterobacterales</taxon>
        <taxon>Enterobacteriaceae</taxon>
        <taxon>Escherichia</taxon>
    </lineage>
</organism>
<evidence type="ECO:0000305" key="1"/>
<reference key="1">
    <citation type="journal article" date="1989" name="Mol. Gen. Genet.">
        <title>Nucleotide sequence of the leading region adjacent to the origin of transfer on plasmid F and its conservation among conjugative plasmids.</title>
        <authorList>
            <person name="Loh S."/>
            <person name="Cram D."/>
            <person name="Skurray R.A."/>
        </authorList>
    </citation>
    <scope>NUCLEOTIDE SEQUENCE [GENOMIC DNA]</scope>
    <source>
        <plasmid>F</plasmid>
    </source>
</reference>
<reference key="2">
    <citation type="submission" date="2000-04" db="EMBL/GenBank/DDBJ databases">
        <title>Complete nucleotide sequence of the F plasmid: its implications for organization and diversification of plasmid genomes.</title>
        <authorList>
            <person name="Shimizu H."/>
            <person name="Saitoh Y."/>
            <person name="Suda Y."/>
            <person name="Uehara K."/>
            <person name="Sampei G."/>
            <person name="Mizobuchi K."/>
        </authorList>
    </citation>
    <scope>NUCLEOTIDE SEQUENCE [LARGE SCALE GENOMIC DNA]</scope>
    <source>
        <strain>K12 / CR63</strain>
        <plasmid>F</plasmid>
    </source>
</reference>
<reference key="3">
    <citation type="journal article" date="1990" name="Nucleic Acids Res.">
        <title>The sequence of the leading region of the resistance plasmid R1.</title>
        <authorList>
            <person name="Graus H."/>
            <person name="Hoedel A."/>
            <person name="Wallner P."/>
            <person name="Hoegenauer G."/>
        </authorList>
    </citation>
    <scope>NUCLEOTIDE SEQUENCE [GENOMIC DNA]</scope>
    <source>
        <strain>K12</strain>
        <plasmid>IncFII R1</plasmid>
    </source>
</reference>
<gene>
    <name type="primary">yubP</name>
    <name type="synonym">ygeB</name>
    <name type="ordered locus">ECOK12F069</name>
</gene>
<sequence>MRLASRFGRYNSIHRERPLTDDELMQFVPSVFSGDKHESRSERYTYIPTINIINKLRDEGFQPFFACQSRVRDLGRREYSKHMLRLRREGHINGQEVPEIILLNSHDGSSSYQMIPGIFRFVCTNGLVCGNNFGEIRVPHKGDIVGQVIEGAYEVLGVFDKVTDNMEAMKEIHLNSDEQHLFGRAALMVRYEDENKTPVTPEQIITPRRWEDKQNDLWTTWQRVQENMIKGGLSGRSASGKNTRTRAITGIDGDIRINKALWVIAEQFRKWKS</sequence>
<accession>P18005</accession>
<accession>P52149</accession>
<geneLocation type="plasmid">
    <name>F</name>
</geneLocation>
<geneLocation type="plasmid">
    <name>IncFII R1</name>
</geneLocation>
<dbReference type="EMBL" id="AF106329">
    <property type="protein sequence ID" value="AAA99218.1"/>
    <property type="molecule type" value="Genomic_DNA"/>
</dbReference>
<dbReference type="EMBL" id="AP001918">
    <property type="protein sequence ID" value="BAA97939.1"/>
    <property type="molecule type" value="Genomic_DNA"/>
</dbReference>
<dbReference type="EMBL" id="X15279">
    <property type="protein sequence ID" value="CAA33351.1"/>
    <property type="molecule type" value="Genomic_DNA"/>
</dbReference>
<dbReference type="PIR" id="JN0037">
    <property type="entry name" value="JN0037"/>
</dbReference>
<dbReference type="PIR" id="S07014">
    <property type="entry name" value="S07014"/>
</dbReference>
<dbReference type="RefSeq" id="NP_061448.1">
    <property type="nucleotide sequence ID" value="NC_002483.1"/>
</dbReference>
<dbReference type="RefSeq" id="WP_001234417.1">
    <property type="nucleotide sequence ID" value="NZ_JACEFS010000057.1"/>
</dbReference>
<dbReference type="InterPro" id="IPR026325">
    <property type="entry name" value="DUF932"/>
</dbReference>
<dbReference type="Pfam" id="PF06067">
    <property type="entry name" value="DUF932"/>
    <property type="match status" value="1"/>
</dbReference>
<comment type="similarity">
    <text evidence="1">Belongs to the UPF0380 family.</text>
</comment>
<name>YUBP_ECOLI</name>